<organism>
    <name type="scientific">Yersinia enterocolitica serotype O:8 / biotype 1B (strain NCTC 13174 / 8081)</name>
    <dbReference type="NCBI Taxonomy" id="393305"/>
    <lineage>
        <taxon>Bacteria</taxon>
        <taxon>Pseudomonadati</taxon>
        <taxon>Pseudomonadota</taxon>
        <taxon>Gammaproteobacteria</taxon>
        <taxon>Enterobacterales</taxon>
        <taxon>Yersiniaceae</taxon>
        <taxon>Yersinia</taxon>
    </lineage>
</organism>
<accession>A1JSJ0</accession>
<reference key="1">
    <citation type="journal article" date="2006" name="PLoS Genet.">
        <title>The complete genome sequence and comparative genome analysis of the high pathogenicity Yersinia enterocolitica strain 8081.</title>
        <authorList>
            <person name="Thomson N.R."/>
            <person name="Howard S."/>
            <person name="Wren B.W."/>
            <person name="Holden M.T.G."/>
            <person name="Crossman L."/>
            <person name="Challis G.L."/>
            <person name="Churcher C."/>
            <person name="Mungall K."/>
            <person name="Brooks K."/>
            <person name="Chillingworth T."/>
            <person name="Feltwell T."/>
            <person name="Abdellah Z."/>
            <person name="Hauser H."/>
            <person name="Jagels K."/>
            <person name="Maddison M."/>
            <person name="Moule S."/>
            <person name="Sanders M."/>
            <person name="Whitehead S."/>
            <person name="Quail M.A."/>
            <person name="Dougan G."/>
            <person name="Parkhill J."/>
            <person name="Prentice M.B."/>
        </authorList>
    </citation>
    <scope>NUCLEOTIDE SEQUENCE [LARGE SCALE GENOMIC DNA]</scope>
    <source>
        <strain>NCTC 13174 / 8081</strain>
    </source>
</reference>
<comment type="function">
    <text evidence="1">Catalyzes the formation of the alpha-1,6-glucosidic linkages in glycogen by scission of a 1,4-alpha-linked oligosaccharide from growing alpha-1,4-glucan chains and the subsequent attachment of the oligosaccharide to the alpha-1,6 position.</text>
</comment>
<comment type="catalytic activity">
    <reaction evidence="1">
        <text>Transfers a segment of a (1-&gt;4)-alpha-D-glucan chain to a primary hydroxy group in a similar glucan chain.</text>
        <dbReference type="EC" id="2.4.1.18"/>
    </reaction>
</comment>
<comment type="pathway">
    <text evidence="1">Glycan biosynthesis; glycogen biosynthesis.</text>
</comment>
<comment type="subunit">
    <text evidence="1">Monomer.</text>
</comment>
<comment type="similarity">
    <text evidence="1">Belongs to the glycosyl hydrolase 13 family. GlgB subfamily.</text>
</comment>
<proteinExistence type="inferred from homology"/>
<keyword id="KW-0119">Carbohydrate metabolism</keyword>
<keyword id="KW-0320">Glycogen biosynthesis</keyword>
<keyword id="KW-0321">Glycogen metabolism</keyword>
<keyword id="KW-0328">Glycosyltransferase</keyword>
<keyword id="KW-0808">Transferase</keyword>
<name>GLGB_YERE8</name>
<sequence>MSVLPDRQVINQIISGHYADPFSVLGMHQTERGLQVCALLPDAQEVWLIDTKTGRRVAQLDCEDPRGFFAVQLTRRKNPFRYQFAVTWQESTQIIEDPYRFGTLLQDIDTWLLAEGTHLRPYERLGAHLMSLDEVPGVSFAVWAPNAQRVSVVGEFNFWDGRRHPMRLRRENGIWELFLPGVQAGQLYKFEIIDCHGQVRLKADPYAFKAQMRPETASLISPLPDVVENTPARQKANDLRSPISIYEVHLGSWRRHTDNNFWLSYGELADQLVEYVKYMGFTHVELLPINEHPFDGSWGYQPLGLYAPTRRFGTPQDFKDFVAKFHEAGINVILDWVPGHFPSDEHGLSTFDGTALYEYADPREGYHQDWNTLIYNYGRNEVRNYLAGNAFYWMERFGIDALRIDAVASMIYRDYSRAEGQWVPNYYGGRENLEAIAFLRYTNHTIGVERPGGVTMAEESTDFPGVTLPPDAGGLGFNYKWNMGWMHDTLNYMQCDPVHRKYHHNLMTFGMLYAYTENFILPISHDEVVHGKRSVLDRMPGDAWQKFANLRAYYGFMWAHPGKKLLFMGCEFAQGREWNFDTSLDWHLLDDENGWHKGVQRWVRDLNHCYQQYAPLYELDYQPAGFEWLVVDDHENSVFAFLRRDADGNELIVISNFTPVPRYNYRVGVPQSGHYREVLNSDSAFYRGSNMGNQGGIHSHPVSSHNHAHSLLLTLPPLSTIYLTRGG</sequence>
<evidence type="ECO:0000255" key="1">
    <source>
        <dbReference type="HAMAP-Rule" id="MF_00685"/>
    </source>
</evidence>
<feature type="chain" id="PRO_1000045006" description="1,4-alpha-glucan branching enzyme GlgB">
    <location>
        <begin position="1"/>
        <end position="727"/>
    </location>
</feature>
<feature type="active site" description="Nucleophile" evidence="1">
    <location>
        <position position="405"/>
    </location>
</feature>
<feature type="active site" description="Proton donor" evidence="1">
    <location>
        <position position="458"/>
    </location>
</feature>
<dbReference type="EC" id="2.4.1.18" evidence="1"/>
<dbReference type="EMBL" id="AM286415">
    <property type="protein sequence ID" value="CAL14031.1"/>
    <property type="molecule type" value="Genomic_DNA"/>
</dbReference>
<dbReference type="RefSeq" id="WP_005174776.1">
    <property type="nucleotide sequence ID" value="NC_008800.1"/>
</dbReference>
<dbReference type="RefSeq" id="YP_001008157.1">
    <property type="nucleotide sequence ID" value="NC_008800.1"/>
</dbReference>
<dbReference type="SMR" id="A1JSJ0"/>
<dbReference type="CAZy" id="CBM48">
    <property type="family name" value="Carbohydrate-Binding Module Family 48"/>
</dbReference>
<dbReference type="CAZy" id="GH13">
    <property type="family name" value="Glycoside Hydrolase Family 13"/>
</dbReference>
<dbReference type="KEGG" id="yen:YE4013"/>
<dbReference type="PATRIC" id="fig|393305.7.peg.4272"/>
<dbReference type="eggNOG" id="COG0296">
    <property type="taxonomic scope" value="Bacteria"/>
</dbReference>
<dbReference type="HOGENOM" id="CLU_004245_3_2_6"/>
<dbReference type="OrthoDB" id="9800174at2"/>
<dbReference type="UniPathway" id="UPA00164"/>
<dbReference type="Proteomes" id="UP000000642">
    <property type="component" value="Chromosome"/>
</dbReference>
<dbReference type="GO" id="GO:0005829">
    <property type="term" value="C:cytosol"/>
    <property type="evidence" value="ECO:0007669"/>
    <property type="project" value="TreeGrafter"/>
</dbReference>
<dbReference type="GO" id="GO:0003844">
    <property type="term" value="F:1,4-alpha-glucan branching enzyme activity"/>
    <property type="evidence" value="ECO:0007669"/>
    <property type="project" value="UniProtKB-UniRule"/>
</dbReference>
<dbReference type="GO" id="GO:0043169">
    <property type="term" value="F:cation binding"/>
    <property type="evidence" value="ECO:0007669"/>
    <property type="project" value="InterPro"/>
</dbReference>
<dbReference type="GO" id="GO:0004553">
    <property type="term" value="F:hydrolase activity, hydrolyzing O-glycosyl compounds"/>
    <property type="evidence" value="ECO:0007669"/>
    <property type="project" value="InterPro"/>
</dbReference>
<dbReference type="GO" id="GO:0005978">
    <property type="term" value="P:glycogen biosynthetic process"/>
    <property type="evidence" value="ECO:0007669"/>
    <property type="project" value="UniProtKB-UniRule"/>
</dbReference>
<dbReference type="CDD" id="cd11322">
    <property type="entry name" value="AmyAc_Glg_BE"/>
    <property type="match status" value="1"/>
</dbReference>
<dbReference type="CDD" id="cd02855">
    <property type="entry name" value="E_set_GBE_prok_N"/>
    <property type="match status" value="1"/>
</dbReference>
<dbReference type="FunFam" id="2.60.40.10:FF:000169">
    <property type="entry name" value="1,4-alpha-glucan branching enzyme GlgB"/>
    <property type="match status" value="1"/>
</dbReference>
<dbReference type="FunFam" id="2.60.40.1180:FF:000002">
    <property type="entry name" value="1,4-alpha-glucan branching enzyme GlgB"/>
    <property type="match status" value="1"/>
</dbReference>
<dbReference type="FunFam" id="3.20.20.80:FF:000003">
    <property type="entry name" value="1,4-alpha-glucan branching enzyme GlgB"/>
    <property type="match status" value="1"/>
</dbReference>
<dbReference type="Gene3D" id="3.20.20.80">
    <property type="entry name" value="Glycosidases"/>
    <property type="match status" value="1"/>
</dbReference>
<dbReference type="Gene3D" id="2.60.40.1180">
    <property type="entry name" value="Golgi alpha-mannosidase II"/>
    <property type="match status" value="1"/>
</dbReference>
<dbReference type="Gene3D" id="2.60.40.10">
    <property type="entry name" value="Immunoglobulins"/>
    <property type="match status" value="2"/>
</dbReference>
<dbReference type="HAMAP" id="MF_00685">
    <property type="entry name" value="GlgB"/>
    <property type="match status" value="1"/>
</dbReference>
<dbReference type="InterPro" id="IPR006048">
    <property type="entry name" value="A-amylase/branching_C"/>
</dbReference>
<dbReference type="InterPro" id="IPR037439">
    <property type="entry name" value="Branching_enzy"/>
</dbReference>
<dbReference type="InterPro" id="IPR006407">
    <property type="entry name" value="GlgB"/>
</dbReference>
<dbReference type="InterPro" id="IPR054169">
    <property type="entry name" value="GlgB_N"/>
</dbReference>
<dbReference type="InterPro" id="IPR044143">
    <property type="entry name" value="GlgB_N_E_set_prok"/>
</dbReference>
<dbReference type="InterPro" id="IPR006047">
    <property type="entry name" value="Glyco_hydro_13_cat_dom"/>
</dbReference>
<dbReference type="InterPro" id="IPR004193">
    <property type="entry name" value="Glyco_hydro_13_N"/>
</dbReference>
<dbReference type="InterPro" id="IPR013780">
    <property type="entry name" value="Glyco_hydro_b"/>
</dbReference>
<dbReference type="InterPro" id="IPR017853">
    <property type="entry name" value="Glycoside_hydrolase_SF"/>
</dbReference>
<dbReference type="InterPro" id="IPR013783">
    <property type="entry name" value="Ig-like_fold"/>
</dbReference>
<dbReference type="InterPro" id="IPR014756">
    <property type="entry name" value="Ig_E-set"/>
</dbReference>
<dbReference type="NCBIfam" id="TIGR01515">
    <property type="entry name" value="branching_enzym"/>
    <property type="match status" value="1"/>
</dbReference>
<dbReference type="NCBIfam" id="NF003811">
    <property type="entry name" value="PRK05402.1"/>
    <property type="match status" value="1"/>
</dbReference>
<dbReference type="NCBIfam" id="NF008967">
    <property type="entry name" value="PRK12313.1"/>
    <property type="match status" value="1"/>
</dbReference>
<dbReference type="PANTHER" id="PTHR43651">
    <property type="entry name" value="1,4-ALPHA-GLUCAN-BRANCHING ENZYME"/>
    <property type="match status" value="1"/>
</dbReference>
<dbReference type="PANTHER" id="PTHR43651:SF3">
    <property type="entry name" value="1,4-ALPHA-GLUCAN-BRANCHING ENZYME"/>
    <property type="match status" value="1"/>
</dbReference>
<dbReference type="Pfam" id="PF00128">
    <property type="entry name" value="Alpha-amylase"/>
    <property type="match status" value="1"/>
</dbReference>
<dbReference type="Pfam" id="PF02806">
    <property type="entry name" value="Alpha-amylase_C"/>
    <property type="match status" value="1"/>
</dbReference>
<dbReference type="Pfam" id="PF02922">
    <property type="entry name" value="CBM_48"/>
    <property type="match status" value="1"/>
</dbReference>
<dbReference type="Pfam" id="PF22019">
    <property type="entry name" value="GlgB_N"/>
    <property type="match status" value="1"/>
</dbReference>
<dbReference type="PIRSF" id="PIRSF000463">
    <property type="entry name" value="GlgB"/>
    <property type="match status" value="1"/>
</dbReference>
<dbReference type="SMART" id="SM00642">
    <property type="entry name" value="Aamy"/>
    <property type="match status" value="1"/>
</dbReference>
<dbReference type="SUPFAM" id="SSF51445">
    <property type="entry name" value="(Trans)glycosidases"/>
    <property type="match status" value="1"/>
</dbReference>
<dbReference type="SUPFAM" id="SSF81296">
    <property type="entry name" value="E set domains"/>
    <property type="match status" value="2"/>
</dbReference>
<dbReference type="SUPFAM" id="SSF51011">
    <property type="entry name" value="Glycosyl hydrolase domain"/>
    <property type="match status" value="1"/>
</dbReference>
<gene>
    <name evidence="1" type="primary">glgB</name>
    <name type="ordered locus">YE4013</name>
</gene>
<protein>
    <recommendedName>
        <fullName evidence="1">1,4-alpha-glucan branching enzyme GlgB</fullName>
        <ecNumber evidence="1">2.4.1.18</ecNumber>
    </recommendedName>
    <alternativeName>
        <fullName evidence="1">1,4-alpha-D-glucan:1,4-alpha-D-glucan 6-glucosyl-transferase</fullName>
    </alternativeName>
    <alternativeName>
        <fullName evidence="1">Alpha-(1-&gt;4)-glucan branching enzyme</fullName>
    </alternativeName>
    <alternativeName>
        <fullName evidence="1">Glycogen branching enzyme</fullName>
        <shortName evidence="1">BE</shortName>
    </alternativeName>
</protein>